<protein>
    <recommendedName>
        <fullName>Actin, muscle-type</fullName>
        <ecNumber evidence="1">3.6.4.-</ecNumber>
    </recommendedName>
    <alternativeName>
        <fullName>A2</fullName>
    </alternativeName>
</protein>
<name>ACT2_MOLOC</name>
<comment type="function">
    <text>Actins are highly conserved proteins that are involved in various types of cell motility and are ubiquitously expressed in all eukaryotic cells. Multiple isoforms are involved in various cellular functions such as cytoskeleton structure, cell mobility, chromosome movement and muscle contraction.</text>
</comment>
<comment type="catalytic activity">
    <reaction evidence="1">
        <text>ATP + H2O = ADP + phosphate + H(+)</text>
        <dbReference type="Rhea" id="RHEA:13065"/>
        <dbReference type="ChEBI" id="CHEBI:15377"/>
        <dbReference type="ChEBI" id="CHEBI:15378"/>
        <dbReference type="ChEBI" id="CHEBI:30616"/>
        <dbReference type="ChEBI" id="CHEBI:43474"/>
        <dbReference type="ChEBI" id="CHEBI:456216"/>
    </reaction>
</comment>
<comment type="subcellular location">
    <subcellularLocation>
        <location>Cytoplasm</location>
        <location>Cytoskeleton</location>
    </subcellularLocation>
</comment>
<comment type="similarity">
    <text evidence="2">Belongs to the actin family.</text>
</comment>
<accession>Q25472</accession>
<sequence length="378" mass="42263">MEDEEEEQTALVCDNGSGLVKAGFAGDDAPRAVFPSIVGRPRHQGVMVGMGQKDSYVGDEAQSKRGILTLKYPIEHGIITNWDDMEKIWHHTFYNELRVAPEEHPVLLTEAPLNPKANREKMTQIMFETFNVPAMYVAIQAVLSLYASGRTTGIVLDSGDGVSHNVPIYEGYALPHAIMRLDLAGRDLTDYLMKILTERGYSFVTTAEREIVRDIKEKLCYVALDFEQEMATAASSSSLEKSYELPDGQVITIGNERFRCPETMFQPSFIGMESSGVHETTYNSIMKCDIDIRKDLYANNVLSGGTTMYPGIADRMQKEITALAPSTMKIKIIAPPERKYSVWIGGSILASLSTFQQMWITKQEYDESGPSIVHRKCF</sequence>
<keyword id="KW-0067">ATP-binding</keyword>
<keyword id="KW-0963">Cytoplasm</keyword>
<keyword id="KW-0206">Cytoskeleton</keyword>
<keyword id="KW-0378">Hydrolase</keyword>
<keyword id="KW-0514">Muscle protein</keyword>
<keyword id="KW-0547">Nucleotide-binding</keyword>
<proteinExistence type="inferred from homology"/>
<feature type="chain" id="PRO_0000088965" description="Actin, muscle-type">
    <location>
        <begin position="1"/>
        <end position="378"/>
    </location>
</feature>
<reference key="1">
    <citation type="journal article" date="1997" name="J. Mol. Evol.">
        <title>Evolution of chordate actin genes: evidence from genomic organization and amino acid sequences.</title>
        <authorList>
            <person name="Kusakabe T."/>
            <person name="Araki I."/>
            <person name="Satoh N."/>
            <person name="Jeffery W.R."/>
        </authorList>
    </citation>
    <scope>NUCLEOTIDE SEQUENCE [GENOMIC DNA]</scope>
    <source>
        <tissue>Gonad</tissue>
    </source>
</reference>
<evidence type="ECO:0000250" key="1">
    <source>
        <dbReference type="UniProtKB" id="P68137"/>
    </source>
</evidence>
<evidence type="ECO:0000305" key="2"/>
<dbReference type="EC" id="3.6.4.-" evidence="1"/>
<dbReference type="EMBL" id="D85743">
    <property type="protein sequence ID" value="BAA12860.1"/>
    <property type="molecule type" value="Genomic_DNA"/>
</dbReference>
<dbReference type="SMR" id="Q25472"/>
<dbReference type="GO" id="GO:0005737">
    <property type="term" value="C:cytoplasm"/>
    <property type="evidence" value="ECO:0007669"/>
    <property type="project" value="UniProtKB-KW"/>
</dbReference>
<dbReference type="GO" id="GO:0005856">
    <property type="term" value="C:cytoskeleton"/>
    <property type="evidence" value="ECO:0007669"/>
    <property type="project" value="UniProtKB-SubCell"/>
</dbReference>
<dbReference type="GO" id="GO:0005524">
    <property type="term" value="F:ATP binding"/>
    <property type="evidence" value="ECO:0007669"/>
    <property type="project" value="UniProtKB-KW"/>
</dbReference>
<dbReference type="GO" id="GO:0016787">
    <property type="term" value="F:hydrolase activity"/>
    <property type="evidence" value="ECO:0007669"/>
    <property type="project" value="UniProtKB-KW"/>
</dbReference>
<dbReference type="CDD" id="cd10224">
    <property type="entry name" value="ASKHA_NBD_actin"/>
    <property type="match status" value="1"/>
</dbReference>
<dbReference type="FunFam" id="3.30.420.40:FF:000131">
    <property type="entry name" value="Actin, alpha skeletal muscle"/>
    <property type="match status" value="1"/>
</dbReference>
<dbReference type="FunFam" id="3.30.420.40:FF:000291">
    <property type="entry name" value="Actin, alpha skeletal muscle"/>
    <property type="match status" value="1"/>
</dbReference>
<dbReference type="FunFam" id="3.90.640.10:FF:000047">
    <property type="entry name" value="Actin, alpha skeletal muscle"/>
    <property type="match status" value="1"/>
</dbReference>
<dbReference type="FunFam" id="3.30.420.40:FF:000058">
    <property type="entry name" value="Putative actin-related protein 5"/>
    <property type="match status" value="1"/>
</dbReference>
<dbReference type="Gene3D" id="3.30.420.40">
    <property type="match status" value="2"/>
</dbReference>
<dbReference type="Gene3D" id="3.90.640.10">
    <property type="entry name" value="Actin, Chain A, domain 4"/>
    <property type="match status" value="1"/>
</dbReference>
<dbReference type="InterPro" id="IPR004000">
    <property type="entry name" value="Actin"/>
</dbReference>
<dbReference type="InterPro" id="IPR020902">
    <property type="entry name" value="Actin/actin-like_CS"/>
</dbReference>
<dbReference type="InterPro" id="IPR004001">
    <property type="entry name" value="Actin_CS"/>
</dbReference>
<dbReference type="InterPro" id="IPR043129">
    <property type="entry name" value="ATPase_NBD"/>
</dbReference>
<dbReference type="PANTHER" id="PTHR11937">
    <property type="entry name" value="ACTIN"/>
    <property type="match status" value="1"/>
</dbReference>
<dbReference type="Pfam" id="PF00022">
    <property type="entry name" value="Actin"/>
    <property type="match status" value="1"/>
</dbReference>
<dbReference type="PRINTS" id="PR00190">
    <property type="entry name" value="ACTIN"/>
</dbReference>
<dbReference type="SMART" id="SM00268">
    <property type="entry name" value="ACTIN"/>
    <property type="match status" value="1"/>
</dbReference>
<dbReference type="SUPFAM" id="SSF53067">
    <property type="entry name" value="Actin-like ATPase domain"/>
    <property type="match status" value="2"/>
</dbReference>
<dbReference type="PROSITE" id="PS00406">
    <property type="entry name" value="ACTINS_1"/>
    <property type="match status" value="1"/>
</dbReference>
<dbReference type="PROSITE" id="PS00432">
    <property type="entry name" value="ACTINS_2"/>
    <property type="match status" value="1"/>
</dbReference>
<dbReference type="PROSITE" id="PS01132">
    <property type="entry name" value="ACTINS_ACT_LIKE"/>
    <property type="match status" value="1"/>
</dbReference>
<organism>
    <name type="scientific">Molgula oculata</name>
    <name type="common">Sea squirt</name>
    <dbReference type="NCBI Taxonomy" id="27575"/>
    <lineage>
        <taxon>Eukaryota</taxon>
        <taxon>Metazoa</taxon>
        <taxon>Chordata</taxon>
        <taxon>Tunicata</taxon>
        <taxon>Ascidiacea</taxon>
        <taxon>Stolidobranchia</taxon>
        <taxon>Molgulidae</taxon>
        <taxon>Molgula</taxon>
    </lineage>
</organism>